<keyword id="KW-0002">3D-structure</keyword>
<keyword id="KW-0028">Amino-acid biosynthesis</keyword>
<keyword id="KW-0100">Branched-chain amino acid biosynthesis</keyword>
<keyword id="KW-1185">Reference proteome</keyword>
<keyword id="KW-0808">Transferase</keyword>
<feature type="chain" id="PRO_0000151419" description="Acetolactate synthase isozyme 1 small subunit">
    <location>
        <begin position="1"/>
        <end position="96"/>
    </location>
</feature>
<feature type="domain" description="ACT" evidence="1">
    <location>
        <begin position="10"/>
        <end position="83"/>
    </location>
</feature>
<feature type="sequence conflict" description="In Ref. 1 and 2." evidence="2" ref="1 2">
    <original>H</original>
    <variation>D</variation>
    <location>
        <position position="24"/>
    </location>
</feature>
<feature type="strand" evidence="3">
    <location>
        <begin position="8"/>
        <end position="16"/>
    </location>
</feature>
<feature type="helix" evidence="3">
    <location>
        <begin position="21"/>
        <end position="30"/>
    </location>
</feature>
<feature type="turn" evidence="3">
    <location>
        <begin position="31"/>
        <end position="33"/>
    </location>
</feature>
<feature type="strand" evidence="3">
    <location>
        <begin position="38"/>
        <end position="43"/>
    </location>
</feature>
<feature type="strand" evidence="3">
    <location>
        <begin position="47"/>
        <end position="57"/>
    </location>
</feature>
<feature type="helix" evidence="3">
    <location>
        <begin position="61"/>
        <end position="71"/>
    </location>
</feature>
<feature type="strand" evidence="3">
    <location>
        <begin position="75"/>
        <end position="81"/>
    </location>
</feature>
<feature type="helix" evidence="3">
    <location>
        <begin position="87"/>
        <end position="95"/>
    </location>
</feature>
<comment type="catalytic activity">
    <reaction>
        <text>2 pyruvate + H(+) = (2S)-2-acetolactate + CO2</text>
        <dbReference type="Rhea" id="RHEA:25249"/>
        <dbReference type="ChEBI" id="CHEBI:15361"/>
        <dbReference type="ChEBI" id="CHEBI:15378"/>
        <dbReference type="ChEBI" id="CHEBI:16526"/>
        <dbReference type="ChEBI" id="CHEBI:58476"/>
        <dbReference type="EC" id="2.2.1.6"/>
    </reaction>
</comment>
<comment type="pathway">
    <text>Amino-acid biosynthesis; L-isoleucine biosynthesis; L-isoleucine from 2-oxobutanoate: step 1/4.</text>
</comment>
<comment type="pathway">
    <text>Amino-acid biosynthesis; L-valine biosynthesis; L-valine from pyruvate: step 1/4.</text>
</comment>
<comment type="subunit">
    <text>Dimer of large and small chains.</text>
</comment>
<comment type="interaction">
    <interactant intactId="EBI-1133508">
        <id>P0ADF8</id>
    </interactant>
    <interactant intactId="EBI-552948">
        <id>P08142</id>
        <label>ilvB</label>
    </interactant>
    <organismsDiffer>false</organismsDiffer>
    <experiments>4</experiments>
</comment>
<comment type="miscellaneous">
    <text>E.coli contains genes for 3 AHAS isozymes: ilvBN, ilvGM and ilvIH.</text>
</comment>
<comment type="similarity">
    <text evidence="2">Belongs to the acetolactate synthase small subunit family.</text>
</comment>
<organism>
    <name type="scientific">Escherichia coli (strain K12)</name>
    <dbReference type="NCBI Taxonomy" id="83333"/>
    <lineage>
        <taxon>Bacteria</taxon>
        <taxon>Pseudomonadati</taxon>
        <taxon>Pseudomonadota</taxon>
        <taxon>Gammaproteobacteria</taxon>
        <taxon>Enterobacterales</taxon>
        <taxon>Enterobacteriaceae</taxon>
        <taxon>Escherichia</taxon>
    </lineage>
</organism>
<evidence type="ECO:0000255" key="1">
    <source>
        <dbReference type="PROSITE-ProRule" id="PRU01007"/>
    </source>
</evidence>
<evidence type="ECO:0000305" key="2"/>
<evidence type="ECO:0007829" key="3">
    <source>
        <dbReference type="PDB" id="5YPP"/>
    </source>
</evidence>
<reference key="1">
    <citation type="journal article" date="1985" name="Nucleic Acids Res.">
        <title>The nucleotide sequence of the ilvBN operon of Escherichia coli: sequence homologies of the acetohydroxy acid synthase isozymes.</title>
        <authorList>
            <person name="Wek R.C."/>
            <person name="Hausser C.A."/>
            <person name="Hatfield G.W."/>
        </authorList>
    </citation>
    <scope>NUCLEOTIDE SEQUENCE [GENOMIC DNA]</scope>
</reference>
<reference key="2">
    <citation type="journal article" date="1985" name="Nucleic Acids Res.">
        <title>The ilvB locus of Escherichia coli K-12 is an operon encoding both subunits of acetohydroxyacid synthase I.</title>
        <authorList>
            <person name="Friden P."/>
            <person name="Donegan J."/>
            <person name="Mullen J."/>
            <person name="Tsui P."/>
            <person name="Freundlich M."/>
        </authorList>
    </citation>
    <scope>NUCLEOTIDE SEQUENCE [GENOMIC DNA]</scope>
</reference>
<reference key="3">
    <citation type="journal article" date="1993" name="Genomics">
        <title>DNA sequence and analysis of 136 kilobases of the Escherichia coli genome: organizational symmetry around the origin of replication.</title>
        <authorList>
            <person name="Burland V.D."/>
            <person name="Plunkett G. III"/>
            <person name="Daniels D.L."/>
            <person name="Blattner F.R."/>
        </authorList>
    </citation>
    <scope>NUCLEOTIDE SEQUENCE [LARGE SCALE GENOMIC DNA]</scope>
    <source>
        <strain>K12 / MG1655 / ATCC 47076</strain>
    </source>
</reference>
<reference key="4">
    <citation type="journal article" date="1997" name="Science">
        <title>The complete genome sequence of Escherichia coli K-12.</title>
        <authorList>
            <person name="Blattner F.R."/>
            <person name="Plunkett G. III"/>
            <person name="Bloch C.A."/>
            <person name="Perna N.T."/>
            <person name="Burland V."/>
            <person name="Riley M."/>
            <person name="Collado-Vides J."/>
            <person name="Glasner J.D."/>
            <person name="Rode C.K."/>
            <person name="Mayhew G.F."/>
            <person name="Gregor J."/>
            <person name="Davis N.W."/>
            <person name="Kirkpatrick H.A."/>
            <person name="Goeden M.A."/>
            <person name="Rose D.J."/>
            <person name="Mau B."/>
            <person name="Shao Y."/>
        </authorList>
    </citation>
    <scope>NUCLEOTIDE SEQUENCE [LARGE SCALE GENOMIC DNA]</scope>
    <source>
        <strain>K12 / MG1655 / ATCC 47076</strain>
    </source>
</reference>
<reference key="5">
    <citation type="journal article" date="2006" name="Mol. Syst. Biol.">
        <title>Highly accurate genome sequences of Escherichia coli K-12 strains MG1655 and W3110.</title>
        <authorList>
            <person name="Hayashi K."/>
            <person name="Morooka N."/>
            <person name="Yamamoto Y."/>
            <person name="Fujita K."/>
            <person name="Isono K."/>
            <person name="Choi S."/>
            <person name="Ohtsubo E."/>
            <person name="Baba T."/>
            <person name="Wanner B.L."/>
            <person name="Mori H."/>
            <person name="Horiuchi T."/>
        </authorList>
    </citation>
    <scope>NUCLEOTIDE SEQUENCE [LARGE SCALE GENOMIC DNA]</scope>
    <source>
        <strain>K12 / W3110 / ATCC 27325 / DSM 5911</strain>
    </source>
</reference>
<reference key="6">
    <citation type="journal article" date="1987" name="J. Bacteriol.">
        <title>Nucleotide sequence of the uhp region of Escherichia coli.</title>
        <authorList>
            <person name="Friedrich M.J."/>
            <person name="Kadner R.J."/>
        </authorList>
    </citation>
    <scope>NUCLEOTIDE SEQUENCE [GENOMIC DNA] OF 69-96</scope>
</reference>
<reference key="7">
    <citation type="journal article" date="1997" name="Electrophoresis">
        <title>Escherichia coli proteome analysis using the gene-protein database.</title>
        <authorList>
            <person name="VanBogelen R.A."/>
            <person name="Abshire K.Z."/>
            <person name="Moldover B."/>
            <person name="Olson E.R."/>
            <person name="Neidhardt F.C."/>
        </authorList>
    </citation>
    <scope>IDENTIFICATION BY 2D-GEL</scope>
</reference>
<gene>
    <name type="primary">ilvN</name>
    <name type="ordered locus">b3670</name>
    <name type="ordered locus">JW3645</name>
</gene>
<accession>P0ADF8</accession>
<accession>P08143</accession>
<accession>Q2M7Y3</accession>
<protein>
    <recommendedName>
        <fullName>Acetolactate synthase isozyme 1 small subunit</fullName>
        <ecNumber>2.2.1.6</ecNumber>
    </recommendedName>
    <alternativeName>
        <fullName>Acetohydroxy-acid synthase I small subunit</fullName>
        <shortName>AHAS-I</shortName>
        <shortName>ALS-I</shortName>
    </alternativeName>
</protein>
<sequence length="96" mass="11106">MQNTTHDNVILELTVRNHPGVMTHVCGLFARRAFNVEGILCLPIQDSDKSHIWLLVNDDQRLEQMISQIDKLEDVVKVQRNQSDPTMFNKIAVFFQ</sequence>
<dbReference type="EC" id="2.2.1.6"/>
<dbReference type="EMBL" id="X02541">
    <property type="protein sequence ID" value="CAA26388.1"/>
    <property type="molecule type" value="Genomic_DNA"/>
</dbReference>
<dbReference type="EMBL" id="L10328">
    <property type="protein sequence ID" value="AAA62022.1"/>
    <property type="molecule type" value="Genomic_DNA"/>
</dbReference>
<dbReference type="EMBL" id="U00096">
    <property type="protein sequence ID" value="AAC76693.1"/>
    <property type="molecule type" value="Genomic_DNA"/>
</dbReference>
<dbReference type="EMBL" id="AP009048">
    <property type="protein sequence ID" value="BAE77623.1"/>
    <property type="molecule type" value="Genomic_DNA"/>
</dbReference>
<dbReference type="EMBL" id="M17102">
    <property type="protein sequence ID" value="AAA24719.1"/>
    <property type="molecule type" value="Genomic_DNA"/>
</dbReference>
<dbReference type="PIR" id="G65168">
    <property type="entry name" value="YCEC1S"/>
</dbReference>
<dbReference type="RefSeq" id="NP_418126.1">
    <property type="nucleotide sequence ID" value="NC_000913.3"/>
</dbReference>
<dbReference type="RefSeq" id="WP_001181706.1">
    <property type="nucleotide sequence ID" value="NZ_STEB01000015.1"/>
</dbReference>
<dbReference type="PDB" id="2LVW">
    <property type="method" value="NMR"/>
    <property type="chains" value="A/B=1-96"/>
</dbReference>
<dbReference type="PDB" id="5YPP">
    <property type="method" value="X-ray"/>
    <property type="resolution" value="1.90 A"/>
    <property type="chains" value="A/B/C/D/E/F=1-96"/>
</dbReference>
<dbReference type="PDB" id="5YPW">
    <property type="method" value="X-ray"/>
    <property type="resolution" value="2.30 A"/>
    <property type="chains" value="A/B/C/D/E/F/G/H=1-96"/>
</dbReference>
<dbReference type="PDB" id="5YPY">
    <property type="method" value="X-ray"/>
    <property type="resolution" value="1.97 A"/>
    <property type="chains" value="A/B/C/D=1-96"/>
</dbReference>
<dbReference type="PDB" id="5YUM">
    <property type="method" value="X-ray"/>
    <property type="resolution" value="2.43 A"/>
    <property type="chains" value="A=1-96"/>
</dbReference>
<dbReference type="PDB" id="6LPI">
    <property type="method" value="X-ray"/>
    <property type="resolution" value="2.85 A"/>
    <property type="chains" value="E/F/G/H=1-96"/>
</dbReference>
<dbReference type="PDBsum" id="2LVW"/>
<dbReference type="PDBsum" id="5YPP"/>
<dbReference type="PDBsum" id="5YPW"/>
<dbReference type="PDBsum" id="5YPY"/>
<dbReference type="PDBsum" id="5YUM"/>
<dbReference type="PDBsum" id="6LPI"/>
<dbReference type="BMRB" id="P0ADF8"/>
<dbReference type="SMR" id="P0ADF8"/>
<dbReference type="BioGRID" id="4262585">
    <property type="interactions" value="11"/>
</dbReference>
<dbReference type="BioGRID" id="852489">
    <property type="interactions" value="3"/>
</dbReference>
<dbReference type="ComplexPortal" id="CPX-3573">
    <property type="entry name" value="Acetolactate synthase I complex"/>
</dbReference>
<dbReference type="FunCoup" id="P0ADF8">
    <property type="interactions" value="189"/>
</dbReference>
<dbReference type="IntAct" id="P0ADF8">
    <property type="interactions" value="6"/>
</dbReference>
<dbReference type="STRING" id="511145.b3670"/>
<dbReference type="jPOST" id="P0ADF8"/>
<dbReference type="PaxDb" id="511145-b3670"/>
<dbReference type="EnsemblBacteria" id="AAC76693">
    <property type="protein sequence ID" value="AAC76693"/>
    <property type="gene ID" value="b3670"/>
</dbReference>
<dbReference type="GeneID" id="93778411"/>
<dbReference type="GeneID" id="948183"/>
<dbReference type="KEGG" id="ecj:JW3645"/>
<dbReference type="KEGG" id="eco:b3670"/>
<dbReference type="KEGG" id="ecoc:C3026_19890"/>
<dbReference type="PATRIC" id="fig|1411691.4.peg.3035"/>
<dbReference type="EchoBASE" id="EB0497"/>
<dbReference type="eggNOG" id="COG0440">
    <property type="taxonomic scope" value="Bacteria"/>
</dbReference>
<dbReference type="HOGENOM" id="CLU_165363_0_0_6"/>
<dbReference type="InParanoid" id="P0ADF8"/>
<dbReference type="OMA" id="NEQSRIW"/>
<dbReference type="OrthoDB" id="9787365at2"/>
<dbReference type="PhylomeDB" id="P0ADF8"/>
<dbReference type="BioCyc" id="EcoCyc:SMALLILVN-MONOMER"/>
<dbReference type="BioCyc" id="MetaCyc:SMALLILVN-MONOMER"/>
<dbReference type="BRENDA" id="2.2.1.6">
    <property type="organism ID" value="2026"/>
</dbReference>
<dbReference type="UniPathway" id="UPA00047">
    <property type="reaction ID" value="UER00055"/>
</dbReference>
<dbReference type="UniPathway" id="UPA00049">
    <property type="reaction ID" value="UER00059"/>
</dbReference>
<dbReference type="EvolutionaryTrace" id="P0ADF8"/>
<dbReference type="PRO" id="PR:P0ADF8"/>
<dbReference type="Proteomes" id="UP000000625">
    <property type="component" value="Chromosome"/>
</dbReference>
<dbReference type="GO" id="GO:0005948">
    <property type="term" value="C:acetolactate synthase complex"/>
    <property type="evidence" value="ECO:0000314"/>
    <property type="project" value="EcoCyc"/>
</dbReference>
<dbReference type="GO" id="GO:0005829">
    <property type="term" value="C:cytosol"/>
    <property type="evidence" value="ECO:0000318"/>
    <property type="project" value="GO_Central"/>
</dbReference>
<dbReference type="GO" id="GO:0003984">
    <property type="term" value="F:acetolactate synthase activity"/>
    <property type="evidence" value="ECO:0000314"/>
    <property type="project" value="EcoCyc"/>
</dbReference>
<dbReference type="GO" id="GO:1990610">
    <property type="term" value="F:acetolactate synthase regulator activity"/>
    <property type="evidence" value="ECO:0007669"/>
    <property type="project" value="InterPro"/>
</dbReference>
<dbReference type="GO" id="GO:0009082">
    <property type="term" value="P:branched-chain amino acid biosynthetic process"/>
    <property type="evidence" value="ECO:0000314"/>
    <property type="project" value="ComplexPortal"/>
</dbReference>
<dbReference type="GO" id="GO:0009097">
    <property type="term" value="P:isoleucine biosynthetic process"/>
    <property type="evidence" value="ECO:0000314"/>
    <property type="project" value="EcoCyc"/>
</dbReference>
<dbReference type="GO" id="GO:0009099">
    <property type="term" value="P:L-valine biosynthetic process"/>
    <property type="evidence" value="ECO:0000314"/>
    <property type="project" value="EcoCyc"/>
</dbReference>
<dbReference type="CDD" id="cd04878">
    <property type="entry name" value="ACT_AHAS"/>
    <property type="match status" value="1"/>
</dbReference>
<dbReference type="FunFam" id="3.30.70.260:FF:000011">
    <property type="entry name" value="Acetolactate synthase isozyme 1 small subunit"/>
    <property type="match status" value="1"/>
</dbReference>
<dbReference type="Gene3D" id="3.30.70.260">
    <property type="match status" value="1"/>
</dbReference>
<dbReference type="InterPro" id="IPR004789">
    <property type="entry name" value="Acetalactate_synth_ssu"/>
</dbReference>
<dbReference type="InterPro" id="IPR045865">
    <property type="entry name" value="ACT-like_dom_sf"/>
</dbReference>
<dbReference type="InterPro" id="IPR002912">
    <property type="entry name" value="ACT_dom"/>
</dbReference>
<dbReference type="InterPro" id="IPR039557">
    <property type="entry name" value="AHAS_ACT"/>
</dbReference>
<dbReference type="InterPro" id="IPR054480">
    <property type="entry name" value="AHAS_small-like_ACT"/>
</dbReference>
<dbReference type="NCBIfam" id="NF006036">
    <property type="entry name" value="PRK08178.1"/>
    <property type="match status" value="1"/>
</dbReference>
<dbReference type="PANTHER" id="PTHR30239:SF4">
    <property type="entry name" value="ACETOLACTATE SYNTHASE ISOZYME 1 SMALL SUBUNIT"/>
    <property type="match status" value="1"/>
</dbReference>
<dbReference type="PANTHER" id="PTHR30239">
    <property type="entry name" value="ACETOLACTATE SYNTHASE SMALL SUBUNIT"/>
    <property type="match status" value="1"/>
</dbReference>
<dbReference type="Pfam" id="PF22629">
    <property type="entry name" value="ACT_AHAS_ss"/>
    <property type="match status" value="1"/>
</dbReference>
<dbReference type="SUPFAM" id="SSF55021">
    <property type="entry name" value="ACT-like"/>
    <property type="match status" value="1"/>
</dbReference>
<dbReference type="PROSITE" id="PS51671">
    <property type="entry name" value="ACT"/>
    <property type="match status" value="1"/>
</dbReference>
<name>ILVN_ECOLI</name>
<proteinExistence type="evidence at protein level"/>